<accession>Q6LKZ5</accession>
<name>ATPE2_PHOPR</name>
<proteinExistence type="inferred from homology"/>
<keyword id="KW-0066">ATP synthesis</keyword>
<keyword id="KW-0997">Cell inner membrane</keyword>
<keyword id="KW-1003">Cell membrane</keyword>
<keyword id="KW-0139">CF(1)</keyword>
<keyword id="KW-0375">Hydrogen ion transport</keyword>
<keyword id="KW-0406">Ion transport</keyword>
<keyword id="KW-0472">Membrane</keyword>
<keyword id="KW-1185">Reference proteome</keyword>
<keyword id="KW-0813">Transport</keyword>
<feature type="chain" id="PRO_0000265855" description="ATP synthase epsilon chain 2">
    <location>
        <begin position="1"/>
        <end position="147"/>
    </location>
</feature>
<evidence type="ECO:0000255" key="1">
    <source>
        <dbReference type="HAMAP-Rule" id="MF_00530"/>
    </source>
</evidence>
<dbReference type="EMBL" id="CR378675">
    <property type="protein sequence ID" value="CAG22010.1"/>
    <property type="molecule type" value="Genomic_DNA"/>
</dbReference>
<dbReference type="RefSeq" id="WP_011220234.1">
    <property type="nucleotide sequence ID" value="NC_006371.1"/>
</dbReference>
<dbReference type="SMR" id="Q6LKZ5"/>
<dbReference type="STRING" id="298386.PBPRB0137"/>
<dbReference type="KEGG" id="ppr:PBPRB0137"/>
<dbReference type="eggNOG" id="COG0355">
    <property type="taxonomic scope" value="Bacteria"/>
</dbReference>
<dbReference type="HOGENOM" id="CLU_084338_2_0_6"/>
<dbReference type="Proteomes" id="UP000000593">
    <property type="component" value="Chromosome 2"/>
</dbReference>
<dbReference type="GO" id="GO:0005886">
    <property type="term" value="C:plasma membrane"/>
    <property type="evidence" value="ECO:0007669"/>
    <property type="project" value="UniProtKB-SubCell"/>
</dbReference>
<dbReference type="GO" id="GO:0045259">
    <property type="term" value="C:proton-transporting ATP synthase complex"/>
    <property type="evidence" value="ECO:0007669"/>
    <property type="project" value="UniProtKB-KW"/>
</dbReference>
<dbReference type="GO" id="GO:0005524">
    <property type="term" value="F:ATP binding"/>
    <property type="evidence" value="ECO:0007669"/>
    <property type="project" value="UniProtKB-UniRule"/>
</dbReference>
<dbReference type="GO" id="GO:0046933">
    <property type="term" value="F:proton-transporting ATP synthase activity, rotational mechanism"/>
    <property type="evidence" value="ECO:0007669"/>
    <property type="project" value="UniProtKB-UniRule"/>
</dbReference>
<dbReference type="CDD" id="cd12152">
    <property type="entry name" value="F1-ATPase_delta"/>
    <property type="match status" value="1"/>
</dbReference>
<dbReference type="FunFam" id="1.20.5.440:FF:000001">
    <property type="entry name" value="ATP synthase epsilon chain"/>
    <property type="match status" value="1"/>
</dbReference>
<dbReference type="Gene3D" id="1.20.5.440">
    <property type="entry name" value="ATP synthase delta/epsilon subunit, C-terminal domain"/>
    <property type="match status" value="1"/>
</dbReference>
<dbReference type="Gene3D" id="2.60.15.10">
    <property type="entry name" value="F0F1 ATP synthase delta/epsilon subunit, N-terminal"/>
    <property type="match status" value="1"/>
</dbReference>
<dbReference type="HAMAP" id="MF_00530">
    <property type="entry name" value="ATP_synth_epsil_bac"/>
    <property type="match status" value="1"/>
</dbReference>
<dbReference type="InterPro" id="IPR036794">
    <property type="entry name" value="ATP_F1_dsu/esu_C_sf"/>
</dbReference>
<dbReference type="InterPro" id="IPR001469">
    <property type="entry name" value="ATP_synth_F1_dsu/esu"/>
</dbReference>
<dbReference type="InterPro" id="IPR020546">
    <property type="entry name" value="ATP_synth_F1_dsu/esu_N"/>
</dbReference>
<dbReference type="InterPro" id="IPR020547">
    <property type="entry name" value="ATP_synth_F1_esu_C"/>
</dbReference>
<dbReference type="InterPro" id="IPR036771">
    <property type="entry name" value="ATPsynth_dsu/esu_N"/>
</dbReference>
<dbReference type="NCBIfam" id="TIGR01216">
    <property type="entry name" value="ATP_synt_epsi"/>
    <property type="match status" value="1"/>
</dbReference>
<dbReference type="NCBIfam" id="NF001847">
    <property type="entry name" value="PRK00571.1-4"/>
    <property type="match status" value="1"/>
</dbReference>
<dbReference type="PANTHER" id="PTHR13822">
    <property type="entry name" value="ATP SYNTHASE DELTA/EPSILON CHAIN"/>
    <property type="match status" value="1"/>
</dbReference>
<dbReference type="PANTHER" id="PTHR13822:SF10">
    <property type="entry name" value="ATP SYNTHASE EPSILON CHAIN, CHLOROPLASTIC"/>
    <property type="match status" value="1"/>
</dbReference>
<dbReference type="Pfam" id="PF00401">
    <property type="entry name" value="ATP-synt_DE"/>
    <property type="match status" value="1"/>
</dbReference>
<dbReference type="Pfam" id="PF02823">
    <property type="entry name" value="ATP-synt_DE_N"/>
    <property type="match status" value="1"/>
</dbReference>
<dbReference type="SUPFAM" id="SSF46604">
    <property type="entry name" value="Epsilon subunit of F1F0-ATP synthase C-terminal domain"/>
    <property type="match status" value="1"/>
</dbReference>
<dbReference type="SUPFAM" id="SSF51344">
    <property type="entry name" value="Epsilon subunit of F1F0-ATP synthase N-terminal domain"/>
    <property type="match status" value="1"/>
</dbReference>
<organism>
    <name type="scientific">Photobacterium profundum (strain SS9)</name>
    <dbReference type="NCBI Taxonomy" id="298386"/>
    <lineage>
        <taxon>Bacteria</taxon>
        <taxon>Pseudomonadati</taxon>
        <taxon>Pseudomonadota</taxon>
        <taxon>Gammaproteobacteria</taxon>
        <taxon>Vibrionales</taxon>
        <taxon>Vibrionaceae</taxon>
        <taxon>Photobacterium</taxon>
    </lineage>
</organism>
<protein>
    <recommendedName>
        <fullName evidence="1">ATP synthase epsilon chain 2</fullName>
    </recommendedName>
    <alternativeName>
        <fullName evidence="1">ATP synthase F1 sector epsilon subunit 2</fullName>
    </alternativeName>
    <alternativeName>
        <fullName evidence="1">F-ATPase epsilon subunit 2</fullName>
    </alternativeName>
</protein>
<gene>
    <name evidence="1" type="primary">atpC2</name>
    <name type="ordered locus">PBPRB0137</name>
</gene>
<sequence length="147" mass="15880">MAIGVTQNTFQLNIVSAEGPLFSGKAHALAISGLDGELGIRPGHSPLLSRIKPGVAYFQTDLKGDDEILYISGGILEVQPSLVTVLADTAMHGKDIDEARANEARRAAEENINKQGNDINFAQAQMDLAKAMAQLRAVELTQKQRRR</sequence>
<reference key="1">
    <citation type="journal article" date="2005" name="Science">
        <title>Life at depth: Photobacterium profundum genome sequence and expression analysis.</title>
        <authorList>
            <person name="Vezzi A."/>
            <person name="Campanaro S."/>
            <person name="D'Angelo M."/>
            <person name="Simonato F."/>
            <person name="Vitulo N."/>
            <person name="Lauro F.M."/>
            <person name="Cestaro A."/>
            <person name="Malacrida G."/>
            <person name="Simionati B."/>
            <person name="Cannata N."/>
            <person name="Romualdi C."/>
            <person name="Bartlett D.H."/>
            <person name="Valle G."/>
        </authorList>
    </citation>
    <scope>NUCLEOTIDE SEQUENCE [LARGE SCALE GENOMIC DNA]</scope>
    <source>
        <strain>ATCC BAA-1253 / SS9</strain>
    </source>
</reference>
<comment type="function">
    <text evidence="1">Produces ATP from ADP in the presence of a proton gradient across the membrane.</text>
</comment>
<comment type="subunit">
    <text>F-type ATPases have 2 components, CF(1) - the catalytic core - and CF(0) - the membrane proton channel. CF(1) has five subunits: alpha(3), beta(3), gamma(1), delta(1), epsilon(1). CF(0) has three main subunits: a, b and c.</text>
</comment>
<comment type="subcellular location">
    <subcellularLocation>
        <location evidence="1">Cell inner membrane</location>
        <topology evidence="1">Peripheral membrane protein</topology>
    </subcellularLocation>
</comment>
<comment type="similarity">
    <text evidence="1">Belongs to the ATPase epsilon chain family.</text>
</comment>